<comment type="function">
    <text evidence="1">Formation of pseudouridine at positions 38, 39 and 40 in the anticodon stem and loop of transfer RNAs.</text>
</comment>
<comment type="catalytic activity">
    <reaction evidence="1">
        <text>uridine(38/39/40) in tRNA = pseudouridine(38/39/40) in tRNA</text>
        <dbReference type="Rhea" id="RHEA:22376"/>
        <dbReference type="Rhea" id="RHEA-COMP:10085"/>
        <dbReference type="Rhea" id="RHEA-COMP:10087"/>
        <dbReference type="ChEBI" id="CHEBI:65314"/>
        <dbReference type="ChEBI" id="CHEBI:65315"/>
        <dbReference type="EC" id="5.4.99.12"/>
    </reaction>
</comment>
<comment type="similarity">
    <text evidence="1">Belongs to the tRNA pseudouridine synthase TruA family.</text>
</comment>
<keyword id="KW-0413">Isomerase</keyword>
<keyword id="KW-0819">tRNA processing</keyword>
<dbReference type="EC" id="5.4.99.12" evidence="1"/>
<dbReference type="EMBL" id="AM774415">
    <property type="protein sequence ID" value="CAP14470.1"/>
    <property type="molecule type" value="Genomic_DNA"/>
</dbReference>
<dbReference type="RefSeq" id="WP_010903475.1">
    <property type="nucleotide sequence ID" value="NC_010364.1"/>
</dbReference>
<dbReference type="SMR" id="B0R6V1"/>
<dbReference type="EnsemblBacteria" id="CAP14470">
    <property type="protein sequence ID" value="CAP14470"/>
    <property type="gene ID" value="OE_3810R"/>
</dbReference>
<dbReference type="GeneID" id="89350191"/>
<dbReference type="KEGG" id="hsl:OE_3810R"/>
<dbReference type="HOGENOM" id="CLU_014673_4_2_2"/>
<dbReference type="PhylomeDB" id="B0R6V1"/>
<dbReference type="Proteomes" id="UP000001321">
    <property type="component" value="Chromosome"/>
</dbReference>
<dbReference type="GO" id="GO:0003723">
    <property type="term" value="F:RNA binding"/>
    <property type="evidence" value="ECO:0007669"/>
    <property type="project" value="InterPro"/>
</dbReference>
<dbReference type="GO" id="GO:0160147">
    <property type="term" value="F:tRNA pseudouridine(38-40) synthase activity"/>
    <property type="evidence" value="ECO:0007669"/>
    <property type="project" value="UniProtKB-EC"/>
</dbReference>
<dbReference type="GO" id="GO:0031119">
    <property type="term" value="P:tRNA pseudouridine synthesis"/>
    <property type="evidence" value="ECO:0007669"/>
    <property type="project" value="UniProtKB-UniRule"/>
</dbReference>
<dbReference type="CDD" id="cd00497">
    <property type="entry name" value="PseudoU_synth_TruA_like"/>
    <property type="match status" value="1"/>
</dbReference>
<dbReference type="Gene3D" id="3.30.70.660">
    <property type="entry name" value="Pseudouridine synthase I, catalytic domain, C-terminal subdomain"/>
    <property type="match status" value="1"/>
</dbReference>
<dbReference type="Gene3D" id="3.30.70.580">
    <property type="entry name" value="Pseudouridine synthase I, catalytic domain, N-terminal subdomain"/>
    <property type="match status" value="1"/>
</dbReference>
<dbReference type="HAMAP" id="MF_00171">
    <property type="entry name" value="TruA"/>
    <property type="match status" value="1"/>
</dbReference>
<dbReference type="InterPro" id="IPR020103">
    <property type="entry name" value="PsdUridine_synth_cat_dom_sf"/>
</dbReference>
<dbReference type="InterPro" id="IPR001406">
    <property type="entry name" value="PsdUridine_synth_TruA"/>
</dbReference>
<dbReference type="InterPro" id="IPR020097">
    <property type="entry name" value="PsdUridine_synth_TruA_a/b_dom"/>
</dbReference>
<dbReference type="InterPro" id="IPR020095">
    <property type="entry name" value="PsdUridine_synth_TruA_C"/>
</dbReference>
<dbReference type="InterPro" id="IPR020094">
    <property type="entry name" value="TruA/RsuA/RluB/E/F_N"/>
</dbReference>
<dbReference type="NCBIfam" id="NF000622">
    <property type="entry name" value="PRK00021.3-3"/>
    <property type="match status" value="1"/>
</dbReference>
<dbReference type="PANTHER" id="PTHR11142">
    <property type="entry name" value="PSEUDOURIDYLATE SYNTHASE"/>
    <property type="match status" value="1"/>
</dbReference>
<dbReference type="PANTHER" id="PTHR11142:SF0">
    <property type="entry name" value="TRNA PSEUDOURIDINE SYNTHASE-LIKE 1"/>
    <property type="match status" value="1"/>
</dbReference>
<dbReference type="Pfam" id="PF01416">
    <property type="entry name" value="PseudoU_synth_1"/>
    <property type="match status" value="1"/>
</dbReference>
<dbReference type="PIRSF" id="PIRSF001430">
    <property type="entry name" value="tRNA_psdUrid_synth"/>
    <property type="match status" value="1"/>
</dbReference>
<dbReference type="SUPFAM" id="SSF55120">
    <property type="entry name" value="Pseudouridine synthase"/>
    <property type="match status" value="1"/>
</dbReference>
<evidence type="ECO:0000255" key="1">
    <source>
        <dbReference type="HAMAP-Rule" id="MF_00171"/>
    </source>
</evidence>
<sequence>MPRRAFRVAYDGRPYHGFQRQPDVSTVAGELFGALRRLDVFDGAKPPGYAAAGRTDAGVSARAQTVAFDAPAWLTPDAFTGALPDPIQVWAHADAPPEFHATHDAVARTYVYYWYAPDSRATDDRAAGALDRLTGTHDFHNLTPNTTNTVRELDATLDRDGAFRVITVRAGGFCRELVRRVVSLVQLVTETGDTDRIDTVLGDEPVAGPDGVPPADPHPLVLHAVAYDGLSFTVDEDAAERARTTFRAARADHHERARVAGHLASI</sequence>
<feature type="chain" id="PRO_1000097746" description="tRNA pseudouridine synthase A">
    <location>
        <begin position="1"/>
        <end position="266"/>
    </location>
</feature>
<feature type="active site" description="Nucleophile" evidence="1">
    <location>
        <position position="56"/>
    </location>
</feature>
<feature type="binding site" evidence="1">
    <location>
        <position position="110"/>
    </location>
    <ligand>
        <name>substrate</name>
    </ligand>
</feature>
<protein>
    <recommendedName>
        <fullName evidence="1">tRNA pseudouridine synthase A</fullName>
        <ecNumber evidence="1">5.4.99.12</ecNumber>
    </recommendedName>
    <alternativeName>
        <fullName evidence="1">tRNA pseudouridine(38-40) synthase</fullName>
    </alternativeName>
    <alternativeName>
        <fullName evidence="1">tRNA pseudouridylate synthase I</fullName>
    </alternativeName>
    <alternativeName>
        <fullName evidence="1">tRNA-uridine isomerase I</fullName>
    </alternativeName>
</protein>
<reference key="1">
    <citation type="journal article" date="2008" name="Genomics">
        <title>Evolution in the laboratory: the genome of Halobacterium salinarum strain R1 compared to that of strain NRC-1.</title>
        <authorList>
            <person name="Pfeiffer F."/>
            <person name="Schuster S.C."/>
            <person name="Broicher A."/>
            <person name="Falb M."/>
            <person name="Palm P."/>
            <person name="Rodewald K."/>
            <person name="Ruepp A."/>
            <person name="Soppa J."/>
            <person name="Tittor J."/>
            <person name="Oesterhelt D."/>
        </authorList>
    </citation>
    <scope>NUCLEOTIDE SEQUENCE [LARGE SCALE GENOMIC DNA]</scope>
    <source>
        <strain>ATCC 29341 / DSM 671 / R1</strain>
    </source>
</reference>
<gene>
    <name evidence="1" type="primary">truA</name>
    <name type="ordered locus">OE_3810R</name>
</gene>
<proteinExistence type="inferred from homology"/>
<name>TRUA_HALS3</name>
<accession>B0R6V1</accession>
<organism>
    <name type="scientific">Halobacterium salinarum (strain ATCC 29341 / DSM 671 / R1)</name>
    <dbReference type="NCBI Taxonomy" id="478009"/>
    <lineage>
        <taxon>Archaea</taxon>
        <taxon>Methanobacteriati</taxon>
        <taxon>Methanobacteriota</taxon>
        <taxon>Stenosarchaea group</taxon>
        <taxon>Halobacteria</taxon>
        <taxon>Halobacteriales</taxon>
        <taxon>Halobacteriaceae</taxon>
        <taxon>Halobacterium</taxon>
        <taxon>Halobacterium salinarum NRC-34001</taxon>
    </lineage>
</organism>